<reference key="1">
    <citation type="submission" date="2000-07" db="EMBL/GenBank/DDBJ databases">
        <title>Cloning, sequencing and analysis of the genes involved in the arginine deiminase pathway of Lactococus lactis.</title>
        <authorList>
            <person name="Aungpraphapornchai P."/>
            <person name="Mulholland F."/>
            <person name="Griffin H.G."/>
            <person name="Gasson M.J."/>
        </authorList>
    </citation>
    <scope>NUCLEOTIDE SEQUENCE [GENOMIC DNA]</scope>
</reference>
<reference key="2">
    <citation type="journal article" date="2007" name="J. Bacteriol.">
        <title>The complete genome sequence of the lactic acid bacterial paradigm Lactococcus lactis subsp. cremoris MG1363.</title>
        <authorList>
            <person name="Wegmann U."/>
            <person name="O'Connell-Motherway M."/>
            <person name="Zomer A."/>
            <person name="Buist G."/>
            <person name="Shearman C."/>
            <person name="Canchaya C."/>
            <person name="Ventura M."/>
            <person name="Goesmann A."/>
            <person name="Gasson M.J."/>
            <person name="Kuipers O.P."/>
            <person name="van Sinderen D."/>
            <person name="Kok J."/>
        </authorList>
    </citation>
    <scope>NUCLEOTIDE SEQUENCE [LARGE SCALE GENOMIC DNA]</scope>
    <source>
        <strain>MG1363</strain>
    </source>
</reference>
<keyword id="KW-0056">Arginine metabolism</keyword>
<keyword id="KW-0963">Cytoplasm</keyword>
<keyword id="KW-0378">Hydrolase</keyword>
<dbReference type="EC" id="3.5.3.6" evidence="1"/>
<dbReference type="EMBL" id="AJ250129">
    <property type="protein sequence ID" value="CAB93579.1"/>
    <property type="molecule type" value="Genomic_DNA"/>
</dbReference>
<dbReference type="EMBL" id="AM406671">
    <property type="protein sequence ID" value="CAL98877.1"/>
    <property type="molecule type" value="Genomic_DNA"/>
</dbReference>
<dbReference type="RefSeq" id="WP_011835985.1">
    <property type="nucleotide sequence ID" value="NC_009004.1"/>
</dbReference>
<dbReference type="SMR" id="Q9K576"/>
<dbReference type="STRING" id="416870.llmg_2313"/>
<dbReference type="GeneID" id="61110358"/>
<dbReference type="KEGG" id="llm:llmg_2313"/>
<dbReference type="eggNOG" id="COG2235">
    <property type="taxonomic scope" value="Bacteria"/>
</dbReference>
<dbReference type="HOGENOM" id="CLU_052662_0_1_9"/>
<dbReference type="OrthoDB" id="9807502at2"/>
<dbReference type="PhylomeDB" id="Q9K576"/>
<dbReference type="UniPathway" id="UPA00254">
    <property type="reaction ID" value="UER00364"/>
</dbReference>
<dbReference type="Proteomes" id="UP000000364">
    <property type="component" value="Chromosome"/>
</dbReference>
<dbReference type="GO" id="GO:0005737">
    <property type="term" value="C:cytoplasm"/>
    <property type="evidence" value="ECO:0007669"/>
    <property type="project" value="UniProtKB-SubCell"/>
</dbReference>
<dbReference type="GO" id="GO:0016990">
    <property type="term" value="F:arginine deiminase activity"/>
    <property type="evidence" value="ECO:0007669"/>
    <property type="project" value="UniProtKB-UniRule"/>
</dbReference>
<dbReference type="GO" id="GO:0019547">
    <property type="term" value="P:arginine catabolic process to ornithine"/>
    <property type="evidence" value="ECO:0007669"/>
    <property type="project" value="UniProtKB-UniRule"/>
</dbReference>
<dbReference type="GO" id="GO:0019546">
    <property type="term" value="P:arginine deiminase pathway"/>
    <property type="evidence" value="ECO:0007669"/>
    <property type="project" value="TreeGrafter"/>
</dbReference>
<dbReference type="Gene3D" id="1.10.3930.10">
    <property type="entry name" value="Arginine deiminase"/>
    <property type="match status" value="1"/>
</dbReference>
<dbReference type="Gene3D" id="3.75.10.10">
    <property type="entry name" value="L-arginine/glycine Amidinotransferase, Chain A"/>
    <property type="match status" value="1"/>
</dbReference>
<dbReference type="HAMAP" id="MF_00242">
    <property type="entry name" value="Arg_deiminase"/>
    <property type="match status" value="1"/>
</dbReference>
<dbReference type="InterPro" id="IPR003876">
    <property type="entry name" value="Arg_deiminase"/>
</dbReference>
<dbReference type="NCBIfam" id="TIGR01078">
    <property type="entry name" value="arcA"/>
    <property type="match status" value="1"/>
</dbReference>
<dbReference type="NCBIfam" id="NF002381">
    <property type="entry name" value="PRK01388.1"/>
    <property type="match status" value="1"/>
</dbReference>
<dbReference type="PANTHER" id="PTHR47271">
    <property type="entry name" value="ARGININE DEIMINASE"/>
    <property type="match status" value="1"/>
</dbReference>
<dbReference type="PANTHER" id="PTHR47271:SF2">
    <property type="entry name" value="ARGININE DEIMINASE"/>
    <property type="match status" value="1"/>
</dbReference>
<dbReference type="Pfam" id="PF02274">
    <property type="entry name" value="ADI"/>
    <property type="match status" value="1"/>
</dbReference>
<dbReference type="PIRSF" id="PIRSF006356">
    <property type="entry name" value="Arg_deiminase"/>
    <property type="match status" value="1"/>
</dbReference>
<dbReference type="PRINTS" id="PR01466">
    <property type="entry name" value="ARGDEIMINASE"/>
</dbReference>
<dbReference type="SUPFAM" id="SSF55909">
    <property type="entry name" value="Pentein"/>
    <property type="match status" value="1"/>
</dbReference>
<accession>Q9K576</accession>
<accession>A2RNI7</accession>
<gene>
    <name evidence="1" type="primary">arcA</name>
    <name type="ordered locus">llmg_2313</name>
</gene>
<evidence type="ECO:0000255" key="1">
    <source>
        <dbReference type="HAMAP-Rule" id="MF_00242"/>
    </source>
</evidence>
<organism>
    <name type="scientific">Lactococcus lactis subsp. cremoris (strain MG1363)</name>
    <dbReference type="NCBI Taxonomy" id="416870"/>
    <lineage>
        <taxon>Bacteria</taxon>
        <taxon>Bacillati</taxon>
        <taxon>Bacillota</taxon>
        <taxon>Bacilli</taxon>
        <taxon>Lactobacillales</taxon>
        <taxon>Streptococcaceae</taxon>
        <taxon>Lactococcus</taxon>
        <taxon>Lactococcus cremoris subsp. cremoris</taxon>
    </lineage>
</organism>
<proteinExistence type="inferred from homology"/>
<name>ARCA_LACLM</name>
<feature type="chain" id="PRO_0000182214" description="Arginine deiminase">
    <location>
        <begin position="1"/>
        <end position="410"/>
    </location>
</feature>
<feature type="active site" description="Amidino-cysteine intermediate" evidence="1">
    <location>
        <position position="400"/>
    </location>
</feature>
<comment type="catalytic activity">
    <reaction evidence="1">
        <text>L-arginine + H2O = L-citrulline + NH4(+)</text>
        <dbReference type="Rhea" id="RHEA:19597"/>
        <dbReference type="ChEBI" id="CHEBI:15377"/>
        <dbReference type="ChEBI" id="CHEBI:28938"/>
        <dbReference type="ChEBI" id="CHEBI:32682"/>
        <dbReference type="ChEBI" id="CHEBI:57743"/>
        <dbReference type="EC" id="3.5.3.6"/>
    </reaction>
</comment>
<comment type="pathway">
    <text evidence="1">Amino-acid degradation; L-arginine degradation via ADI pathway; carbamoyl phosphate from L-arginine: step 1/2.</text>
</comment>
<comment type="subcellular location">
    <subcellularLocation>
        <location evidence="1">Cytoplasm</location>
    </subcellularLocation>
</comment>
<comment type="similarity">
    <text evidence="1">Belongs to the arginine deiminase family.</text>
</comment>
<sequence>MNNGINVNSEIGKLKSVLLHRPGAEVENITPDTMKQLLFDDIPYLKIAQKEHDFFAQTLRDNGAETVYIENLATEVFEKSSETKEEFLSHLLHEAGYRPGRTYDGLTEYLTSMPTKDMVEKVYAGVRKNELDIKRTALSDMAGSDAENYFYLNPLPNAYFTRDPQASMGVGMTINKMTFPARQPESLITEYVMANHPRFKDTPIWRDRNHTTRIEGGDELILNKTTVAIGVSERTSSKTIQNLAKELFANPLSTFDTVLAVEIPHNHAMMHLDTVFTMINHDQFTVFPGIMDGAGNINVFILRPGQDGEVEIEHLTDLKAALKKVLNLSELDLIECGAGDPIAAPREQWNDGSNTLAIAPGEIVTYDRNYVTVELLKEHGIKVHEILSSELGRGRGGARCMSQPLWREDL</sequence>
<protein>
    <recommendedName>
        <fullName evidence="1">Arginine deiminase</fullName>
        <shortName evidence="1">ADI</shortName>
        <ecNumber evidence="1">3.5.3.6</ecNumber>
    </recommendedName>
    <alternativeName>
        <fullName evidence="1">Arginine dihydrolase</fullName>
        <shortName evidence="1">AD</shortName>
    </alternativeName>
</protein>